<reference key="1">
    <citation type="submission" date="2005-09" db="EMBL/GenBank/DDBJ databases">
        <title>Complete genome sequence of Clostridium kluyveri and comparative genomics of Clostridia species.</title>
        <authorList>
            <person name="Inui M."/>
            <person name="Nonaka H."/>
            <person name="Shinoda Y."/>
            <person name="Ikenaga Y."/>
            <person name="Abe M."/>
            <person name="Naito K."/>
            <person name="Vertes A.A."/>
            <person name="Yukawa H."/>
        </authorList>
    </citation>
    <scope>NUCLEOTIDE SEQUENCE [LARGE SCALE GENOMIC DNA]</scope>
    <source>
        <strain>NBRC 12016</strain>
    </source>
</reference>
<protein>
    <recommendedName>
        <fullName evidence="1">Tryptophan synthase alpha chain</fullName>
        <ecNumber evidence="1">4.2.1.20</ecNumber>
    </recommendedName>
</protein>
<sequence length="263" mass="28835">MNRIDFKFKELKDQGKKALIPFITAGDPSLDTTVNIVLEMDKKGADIVEIGIPYSDPLADGPIIQGSSQRAIKGGAKIRNIMETVRKIRGKSEIPLVYMVYYSSIFKYGLERFIAEASAVGINGIIIPDLPIEERGDIMDITVKYEVHLIPLVAPTSKRRIQEIAAGGSGFVYCVSKNGVTGVGEKIKTDIKEYMELVGSYTELPKALGFGISGSSMAREFKPYCDGIIIGSAIIDIIYKCKGEKEILDKVGNFISEVKKSLE</sequence>
<dbReference type="EC" id="4.2.1.20" evidence="1"/>
<dbReference type="EMBL" id="AP009049">
    <property type="protein sequence ID" value="BAH06227.1"/>
    <property type="molecule type" value="Genomic_DNA"/>
</dbReference>
<dbReference type="RefSeq" id="WP_012101667.1">
    <property type="nucleotide sequence ID" value="NC_011837.1"/>
</dbReference>
<dbReference type="SMR" id="B9E152"/>
<dbReference type="KEGG" id="ckr:CKR_1176"/>
<dbReference type="HOGENOM" id="CLU_016734_0_0_9"/>
<dbReference type="UniPathway" id="UPA00035">
    <property type="reaction ID" value="UER00044"/>
</dbReference>
<dbReference type="Proteomes" id="UP000007969">
    <property type="component" value="Chromosome"/>
</dbReference>
<dbReference type="GO" id="GO:0005829">
    <property type="term" value="C:cytosol"/>
    <property type="evidence" value="ECO:0007669"/>
    <property type="project" value="TreeGrafter"/>
</dbReference>
<dbReference type="GO" id="GO:0004834">
    <property type="term" value="F:tryptophan synthase activity"/>
    <property type="evidence" value="ECO:0007669"/>
    <property type="project" value="UniProtKB-UniRule"/>
</dbReference>
<dbReference type="CDD" id="cd04724">
    <property type="entry name" value="Tryptophan_synthase_alpha"/>
    <property type="match status" value="1"/>
</dbReference>
<dbReference type="FunFam" id="3.20.20.70:FF:000037">
    <property type="entry name" value="Tryptophan synthase alpha chain"/>
    <property type="match status" value="1"/>
</dbReference>
<dbReference type="Gene3D" id="3.20.20.70">
    <property type="entry name" value="Aldolase class I"/>
    <property type="match status" value="1"/>
</dbReference>
<dbReference type="HAMAP" id="MF_00131">
    <property type="entry name" value="Trp_synth_alpha"/>
    <property type="match status" value="1"/>
</dbReference>
<dbReference type="InterPro" id="IPR013785">
    <property type="entry name" value="Aldolase_TIM"/>
</dbReference>
<dbReference type="InterPro" id="IPR011060">
    <property type="entry name" value="RibuloseP-bd_barrel"/>
</dbReference>
<dbReference type="InterPro" id="IPR018204">
    <property type="entry name" value="Trp_synthase_alpha_AS"/>
</dbReference>
<dbReference type="InterPro" id="IPR002028">
    <property type="entry name" value="Trp_synthase_suA"/>
</dbReference>
<dbReference type="NCBIfam" id="TIGR00262">
    <property type="entry name" value="trpA"/>
    <property type="match status" value="1"/>
</dbReference>
<dbReference type="PANTHER" id="PTHR43406:SF1">
    <property type="entry name" value="TRYPTOPHAN SYNTHASE ALPHA CHAIN, CHLOROPLASTIC"/>
    <property type="match status" value="1"/>
</dbReference>
<dbReference type="PANTHER" id="PTHR43406">
    <property type="entry name" value="TRYPTOPHAN SYNTHASE, ALPHA CHAIN"/>
    <property type="match status" value="1"/>
</dbReference>
<dbReference type="Pfam" id="PF00290">
    <property type="entry name" value="Trp_syntA"/>
    <property type="match status" value="1"/>
</dbReference>
<dbReference type="SUPFAM" id="SSF51366">
    <property type="entry name" value="Ribulose-phoshate binding barrel"/>
    <property type="match status" value="1"/>
</dbReference>
<dbReference type="PROSITE" id="PS00167">
    <property type="entry name" value="TRP_SYNTHASE_ALPHA"/>
    <property type="match status" value="1"/>
</dbReference>
<proteinExistence type="inferred from homology"/>
<organism>
    <name type="scientific">Clostridium kluyveri (strain NBRC 12016)</name>
    <dbReference type="NCBI Taxonomy" id="583346"/>
    <lineage>
        <taxon>Bacteria</taxon>
        <taxon>Bacillati</taxon>
        <taxon>Bacillota</taxon>
        <taxon>Clostridia</taxon>
        <taxon>Eubacteriales</taxon>
        <taxon>Clostridiaceae</taxon>
        <taxon>Clostridium</taxon>
    </lineage>
</organism>
<gene>
    <name evidence="1" type="primary">trpA</name>
    <name type="ordered locus">CKR_1176</name>
</gene>
<keyword id="KW-0028">Amino-acid biosynthesis</keyword>
<keyword id="KW-0057">Aromatic amino acid biosynthesis</keyword>
<keyword id="KW-0456">Lyase</keyword>
<keyword id="KW-0822">Tryptophan biosynthesis</keyword>
<name>TRPA_CLOK1</name>
<comment type="function">
    <text evidence="1">The alpha subunit is responsible for the aldol cleavage of indoleglycerol phosphate to indole and glyceraldehyde 3-phosphate.</text>
</comment>
<comment type="catalytic activity">
    <reaction evidence="1">
        <text>(1S,2R)-1-C-(indol-3-yl)glycerol 3-phosphate + L-serine = D-glyceraldehyde 3-phosphate + L-tryptophan + H2O</text>
        <dbReference type="Rhea" id="RHEA:10532"/>
        <dbReference type="ChEBI" id="CHEBI:15377"/>
        <dbReference type="ChEBI" id="CHEBI:33384"/>
        <dbReference type="ChEBI" id="CHEBI:57912"/>
        <dbReference type="ChEBI" id="CHEBI:58866"/>
        <dbReference type="ChEBI" id="CHEBI:59776"/>
        <dbReference type="EC" id="4.2.1.20"/>
    </reaction>
</comment>
<comment type="pathway">
    <text evidence="1">Amino-acid biosynthesis; L-tryptophan biosynthesis; L-tryptophan from chorismate: step 5/5.</text>
</comment>
<comment type="subunit">
    <text evidence="1">Tetramer of two alpha and two beta chains.</text>
</comment>
<comment type="similarity">
    <text evidence="1">Belongs to the TrpA family.</text>
</comment>
<evidence type="ECO:0000255" key="1">
    <source>
        <dbReference type="HAMAP-Rule" id="MF_00131"/>
    </source>
</evidence>
<feature type="chain" id="PRO_1000198707" description="Tryptophan synthase alpha chain">
    <location>
        <begin position="1"/>
        <end position="263"/>
    </location>
</feature>
<feature type="active site" description="Proton acceptor" evidence="1">
    <location>
        <position position="49"/>
    </location>
</feature>
<feature type="active site" description="Proton acceptor" evidence="1">
    <location>
        <position position="60"/>
    </location>
</feature>
<accession>B9E152</accession>